<sequence>MGEVSAIVLAASQAAEEGGESSNFLIPNGTFFVVLAIFLVVLAVIGTFVVPPILKVLRERDAMVAKTLADNKKSDEQFAAAQADYDEAMTEARVQASSLRDNARADGRKVIEDARVRAEQQVASTLQTAHEQLKRERDAVELDLRAHVGTMSATLASRILGVDLTASAATR</sequence>
<gene>
    <name evidence="1" type="primary">atpF</name>
    <name type="ordered locus">MT1346</name>
</gene>
<protein>
    <recommendedName>
        <fullName evidence="1">ATP synthase subunit b</fullName>
    </recommendedName>
    <alternativeName>
        <fullName evidence="1">ATP synthase F(0) sector subunit b</fullName>
    </alternativeName>
    <alternativeName>
        <fullName evidence="1">ATPase subunit I</fullName>
    </alternativeName>
    <alternativeName>
        <fullName evidence="1">F-type ATPase subunit b</fullName>
        <shortName evidence="1">F-ATPase subunit b</shortName>
    </alternativeName>
</protein>
<reference key="1">
    <citation type="journal article" date="2002" name="J. Bacteriol.">
        <title>Whole-genome comparison of Mycobacterium tuberculosis clinical and laboratory strains.</title>
        <authorList>
            <person name="Fleischmann R.D."/>
            <person name="Alland D."/>
            <person name="Eisen J.A."/>
            <person name="Carpenter L."/>
            <person name="White O."/>
            <person name="Peterson J.D."/>
            <person name="DeBoy R.T."/>
            <person name="Dodson R.J."/>
            <person name="Gwinn M.L."/>
            <person name="Haft D.H."/>
            <person name="Hickey E.K."/>
            <person name="Kolonay J.F."/>
            <person name="Nelson W.C."/>
            <person name="Umayam L.A."/>
            <person name="Ermolaeva M.D."/>
            <person name="Salzberg S.L."/>
            <person name="Delcher A."/>
            <person name="Utterback T.R."/>
            <person name="Weidman J.F."/>
            <person name="Khouri H.M."/>
            <person name="Gill J."/>
            <person name="Mikula A."/>
            <person name="Bishai W."/>
            <person name="Jacobs W.R. Jr."/>
            <person name="Venter J.C."/>
            <person name="Fraser C.M."/>
        </authorList>
    </citation>
    <scope>NUCLEOTIDE SEQUENCE [LARGE SCALE GENOMIC DNA]</scope>
    <source>
        <strain>CDC 1551 / Oshkosh</strain>
    </source>
</reference>
<keyword id="KW-0066">ATP synthesis</keyword>
<keyword id="KW-1003">Cell membrane</keyword>
<keyword id="KW-0138">CF(0)</keyword>
<keyword id="KW-0375">Hydrogen ion transport</keyword>
<keyword id="KW-0406">Ion transport</keyword>
<keyword id="KW-0472">Membrane</keyword>
<keyword id="KW-1185">Reference proteome</keyword>
<keyword id="KW-0812">Transmembrane</keyword>
<keyword id="KW-1133">Transmembrane helix</keyword>
<keyword id="KW-0813">Transport</keyword>
<organism>
    <name type="scientific">Mycobacterium tuberculosis (strain CDC 1551 / Oshkosh)</name>
    <dbReference type="NCBI Taxonomy" id="83331"/>
    <lineage>
        <taxon>Bacteria</taxon>
        <taxon>Bacillati</taxon>
        <taxon>Actinomycetota</taxon>
        <taxon>Actinomycetes</taxon>
        <taxon>Mycobacteriales</taxon>
        <taxon>Mycobacteriaceae</taxon>
        <taxon>Mycobacterium</taxon>
        <taxon>Mycobacterium tuberculosis complex</taxon>
    </lineage>
</organism>
<accession>P9WPV4</accession>
<accession>L0T990</accession>
<accession>P63656</accession>
<accession>Q10596</accession>
<proteinExistence type="inferred from homology"/>
<feature type="chain" id="PRO_0000426900" description="ATP synthase subunit b">
    <location>
        <begin position="1"/>
        <end position="171"/>
    </location>
</feature>
<feature type="transmembrane region" description="Helical" evidence="1">
    <location>
        <begin position="31"/>
        <end position="51"/>
    </location>
</feature>
<name>ATPF_MYCTO</name>
<dbReference type="EMBL" id="AE000516">
    <property type="protein sequence ID" value="AAK45608.1"/>
    <property type="molecule type" value="Genomic_DNA"/>
</dbReference>
<dbReference type="PIR" id="F70774">
    <property type="entry name" value="F70774"/>
</dbReference>
<dbReference type="RefSeq" id="WP_003898818.1">
    <property type="nucleotide sequence ID" value="NZ_KK341227.1"/>
</dbReference>
<dbReference type="SMR" id="P9WPV4"/>
<dbReference type="KEGG" id="mtc:MT1346"/>
<dbReference type="PATRIC" id="fig|83331.31.peg.1452"/>
<dbReference type="HOGENOM" id="CLU_079215_5_2_11"/>
<dbReference type="Proteomes" id="UP000001020">
    <property type="component" value="Chromosome"/>
</dbReference>
<dbReference type="GO" id="GO:0005886">
    <property type="term" value="C:plasma membrane"/>
    <property type="evidence" value="ECO:0007669"/>
    <property type="project" value="UniProtKB-SubCell"/>
</dbReference>
<dbReference type="GO" id="GO:0045259">
    <property type="term" value="C:proton-transporting ATP synthase complex"/>
    <property type="evidence" value="ECO:0007669"/>
    <property type="project" value="UniProtKB-KW"/>
</dbReference>
<dbReference type="GO" id="GO:0046933">
    <property type="term" value="F:proton-transporting ATP synthase activity, rotational mechanism"/>
    <property type="evidence" value="ECO:0007669"/>
    <property type="project" value="UniProtKB-UniRule"/>
</dbReference>
<dbReference type="GO" id="GO:0046961">
    <property type="term" value="F:proton-transporting ATPase activity, rotational mechanism"/>
    <property type="evidence" value="ECO:0007669"/>
    <property type="project" value="TreeGrafter"/>
</dbReference>
<dbReference type="CDD" id="cd06503">
    <property type="entry name" value="ATP-synt_Fo_b"/>
    <property type="match status" value="1"/>
</dbReference>
<dbReference type="Gene3D" id="1.20.5.620">
    <property type="entry name" value="F1F0 ATP synthase subunit B, membrane domain"/>
    <property type="match status" value="1"/>
</dbReference>
<dbReference type="HAMAP" id="MF_01398">
    <property type="entry name" value="ATP_synth_b_bprime"/>
    <property type="match status" value="1"/>
</dbReference>
<dbReference type="InterPro" id="IPR028987">
    <property type="entry name" value="ATP_synth_B-like_membr_sf"/>
</dbReference>
<dbReference type="InterPro" id="IPR002146">
    <property type="entry name" value="ATP_synth_b/b'su_bac/chlpt"/>
</dbReference>
<dbReference type="InterPro" id="IPR050059">
    <property type="entry name" value="ATP_synthase_B_chain"/>
</dbReference>
<dbReference type="NCBIfam" id="NF004412">
    <property type="entry name" value="PRK05759.1-3"/>
    <property type="match status" value="1"/>
</dbReference>
<dbReference type="PANTHER" id="PTHR33445:SF1">
    <property type="entry name" value="ATP SYNTHASE SUBUNIT B"/>
    <property type="match status" value="1"/>
</dbReference>
<dbReference type="PANTHER" id="PTHR33445">
    <property type="entry name" value="ATP SYNTHASE SUBUNIT B', CHLOROPLASTIC"/>
    <property type="match status" value="1"/>
</dbReference>
<dbReference type="Pfam" id="PF00430">
    <property type="entry name" value="ATP-synt_B"/>
    <property type="match status" value="1"/>
</dbReference>
<dbReference type="SUPFAM" id="SSF81573">
    <property type="entry name" value="F1F0 ATP synthase subunit B, membrane domain"/>
    <property type="match status" value="1"/>
</dbReference>
<evidence type="ECO:0000255" key="1">
    <source>
        <dbReference type="HAMAP-Rule" id="MF_01398"/>
    </source>
</evidence>
<comment type="function">
    <text evidence="1">F(1)F(0) ATP synthase produces ATP from ADP in the presence of a proton or sodium gradient. F-type ATPases consist of two structural domains, F(1) containing the extramembraneous catalytic core and F(0) containing the membrane proton channel, linked together by a central stalk and a peripheral stalk. During catalysis, ATP synthesis in the catalytic domain of F(1) is coupled via a rotary mechanism of the central stalk subunits to proton translocation.</text>
</comment>
<comment type="function">
    <text evidence="1">Component of the F(0) channel, it forms part of the peripheral stalk, linking F(1) to F(0).</text>
</comment>
<comment type="subunit">
    <text evidence="1">F-type ATPases have 2 components, F(1) - the catalytic core - and F(0) - the membrane proton channel. F(1) has five subunits: alpha(3), beta(3), gamma(1), delta(1), epsilon(1). F(0) has three main subunits: a(1), b(2) and c(10-14). The alpha and beta chains form an alternating ring which encloses part of the gamma chain. F(1) is attached to F(0) by a central stalk formed by the gamma and epsilon chains, while a peripheral stalk is formed by the delta and b chains.</text>
</comment>
<comment type="subcellular location">
    <subcellularLocation>
        <location evidence="1">Cell membrane</location>
        <topology evidence="1">Single-pass membrane protein</topology>
    </subcellularLocation>
</comment>
<comment type="similarity">
    <text evidence="1">Belongs to the ATPase B chain family.</text>
</comment>